<comment type="function">
    <text evidence="1">One of the primary rRNA binding proteins, it binds directly to 16S rRNA where it nucleates assembly of the head domain of the 30S subunit.</text>
</comment>
<comment type="subunit">
    <text>Part of the 30S ribosomal subunit.</text>
</comment>
<comment type="subcellular location">
    <subcellularLocation>
        <location>Plastid</location>
        <location>Chloroplast</location>
    </subcellularLocation>
</comment>
<comment type="similarity">
    <text evidence="2">Belongs to the universal ribosomal protein uS7 family.</text>
</comment>
<proteinExistence type="inferred from homology"/>
<sequence>MSRRGTAEEKTAKSDPIYRNRLVNMLVNRILKHGKKSLAYQILYRAVKKIQQKTETNPLSVLRQAIRGVTPDIAVKARRVGGSTHQVPIEIGSTQGKALAIRWLLGASRKRPGRNMAFKLSSELVDAAKGSGDAIRKKEETHRMAEANRAFAHFR</sequence>
<organism>
    <name type="scientific">Magnolia stellata</name>
    <name type="common">Star magnolia</name>
    <name type="synonym">Buergeria stellata</name>
    <dbReference type="NCBI Taxonomy" id="54733"/>
    <lineage>
        <taxon>Eukaryota</taxon>
        <taxon>Viridiplantae</taxon>
        <taxon>Streptophyta</taxon>
        <taxon>Embryophyta</taxon>
        <taxon>Tracheophyta</taxon>
        <taxon>Spermatophyta</taxon>
        <taxon>Magnoliopsida</taxon>
        <taxon>Magnoliidae</taxon>
        <taxon>Magnoliales</taxon>
        <taxon>Magnoliaceae</taxon>
        <taxon>Magnolia</taxon>
    </lineage>
</organism>
<name>RR7_MAGST</name>
<dbReference type="EMBL" id="AF238071">
    <property type="protein sequence ID" value="AAQ14218.1"/>
    <property type="molecule type" value="Genomic_DNA"/>
</dbReference>
<dbReference type="RefSeq" id="YP_010368765.1">
    <property type="nucleotide sequence ID" value="NC_062926.1"/>
</dbReference>
<dbReference type="RefSeq" id="YP_010368778.1">
    <property type="nucleotide sequence ID" value="NC_062926.1"/>
</dbReference>
<dbReference type="SMR" id="Q6KGX6"/>
<dbReference type="GeneID" id="71949648"/>
<dbReference type="GeneID" id="71949759"/>
<dbReference type="GO" id="GO:0009507">
    <property type="term" value="C:chloroplast"/>
    <property type="evidence" value="ECO:0007669"/>
    <property type="project" value="UniProtKB-SubCell"/>
</dbReference>
<dbReference type="GO" id="GO:0015935">
    <property type="term" value="C:small ribosomal subunit"/>
    <property type="evidence" value="ECO:0007669"/>
    <property type="project" value="InterPro"/>
</dbReference>
<dbReference type="GO" id="GO:0019843">
    <property type="term" value="F:rRNA binding"/>
    <property type="evidence" value="ECO:0007669"/>
    <property type="project" value="UniProtKB-UniRule"/>
</dbReference>
<dbReference type="GO" id="GO:0003735">
    <property type="term" value="F:structural constituent of ribosome"/>
    <property type="evidence" value="ECO:0007669"/>
    <property type="project" value="InterPro"/>
</dbReference>
<dbReference type="GO" id="GO:0006412">
    <property type="term" value="P:translation"/>
    <property type="evidence" value="ECO:0007669"/>
    <property type="project" value="UniProtKB-UniRule"/>
</dbReference>
<dbReference type="CDD" id="cd14871">
    <property type="entry name" value="uS7_Chloroplast"/>
    <property type="match status" value="1"/>
</dbReference>
<dbReference type="FunFam" id="1.10.455.10:FF:000001">
    <property type="entry name" value="30S ribosomal protein S7"/>
    <property type="match status" value="1"/>
</dbReference>
<dbReference type="Gene3D" id="1.10.455.10">
    <property type="entry name" value="Ribosomal protein S7 domain"/>
    <property type="match status" value="1"/>
</dbReference>
<dbReference type="HAMAP" id="MF_00480_B">
    <property type="entry name" value="Ribosomal_uS7_B"/>
    <property type="match status" value="1"/>
</dbReference>
<dbReference type="InterPro" id="IPR000235">
    <property type="entry name" value="Ribosomal_uS7"/>
</dbReference>
<dbReference type="InterPro" id="IPR005717">
    <property type="entry name" value="Ribosomal_uS7_bac/org-type"/>
</dbReference>
<dbReference type="InterPro" id="IPR020606">
    <property type="entry name" value="Ribosomal_uS7_CS"/>
</dbReference>
<dbReference type="InterPro" id="IPR023798">
    <property type="entry name" value="Ribosomal_uS7_dom"/>
</dbReference>
<dbReference type="InterPro" id="IPR036823">
    <property type="entry name" value="Ribosomal_uS7_dom_sf"/>
</dbReference>
<dbReference type="NCBIfam" id="TIGR01029">
    <property type="entry name" value="rpsG_bact"/>
    <property type="match status" value="1"/>
</dbReference>
<dbReference type="PANTHER" id="PTHR11205">
    <property type="entry name" value="RIBOSOMAL PROTEIN S7"/>
    <property type="match status" value="1"/>
</dbReference>
<dbReference type="Pfam" id="PF00177">
    <property type="entry name" value="Ribosomal_S7"/>
    <property type="match status" value="1"/>
</dbReference>
<dbReference type="PIRSF" id="PIRSF002122">
    <property type="entry name" value="RPS7p_RPS7a_RPS5e_RPS7o"/>
    <property type="match status" value="1"/>
</dbReference>
<dbReference type="SUPFAM" id="SSF47973">
    <property type="entry name" value="Ribosomal protein S7"/>
    <property type="match status" value="1"/>
</dbReference>
<dbReference type="PROSITE" id="PS00052">
    <property type="entry name" value="RIBOSOMAL_S7"/>
    <property type="match status" value="1"/>
</dbReference>
<keyword id="KW-0150">Chloroplast</keyword>
<keyword id="KW-0934">Plastid</keyword>
<keyword id="KW-0687">Ribonucleoprotein</keyword>
<keyword id="KW-0689">Ribosomal protein</keyword>
<keyword id="KW-0694">RNA-binding</keyword>
<keyword id="KW-0699">rRNA-binding</keyword>
<geneLocation type="chloroplast"/>
<accession>Q6KGX6</accession>
<gene>
    <name type="primary">rps7</name>
</gene>
<evidence type="ECO:0000250" key="1"/>
<evidence type="ECO:0000305" key="2"/>
<feature type="chain" id="PRO_0000124470" description="Small ribosomal subunit protein uS7c">
    <location>
        <begin position="1"/>
        <end position="155"/>
    </location>
</feature>
<reference key="1">
    <citation type="submission" date="2000-02" db="EMBL/GenBank/DDBJ databases">
        <title>Long branches in the seed plants and the root of the angiosperms.</title>
        <authorList>
            <person name="Graham S.W."/>
            <person name="Reeves P.A."/>
            <person name="Burns A."/>
            <person name="Olmstead R.G."/>
        </authorList>
    </citation>
    <scope>NUCLEOTIDE SEQUENCE [GENOMIC DNA]</scope>
</reference>
<protein>
    <recommendedName>
        <fullName evidence="2">Small ribosomal subunit protein uS7c</fullName>
    </recommendedName>
    <alternativeName>
        <fullName>30S ribosomal protein S7, chloroplastic</fullName>
    </alternativeName>
</protein>